<organism>
    <name type="scientific">Rattus norvegicus</name>
    <name type="common">Rat</name>
    <dbReference type="NCBI Taxonomy" id="10116"/>
    <lineage>
        <taxon>Eukaryota</taxon>
        <taxon>Metazoa</taxon>
        <taxon>Chordata</taxon>
        <taxon>Craniata</taxon>
        <taxon>Vertebrata</taxon>
        <taxon>Euteleostomi</taxon>
        <taxon>Mammalia</taxon>
        <taxon>Eutheria</taxon>
        <taxon>Euarchontoglires</taxon>
        <taxon>Glires</taxon>
        <taxon>Rodentia</taxon>
        <taxon>Myomorpha</taxon>
        <taxon>Muroidea</taxon>
        <taxon>Muridae</taxon>
        <taxon>Murinae</taxon>
        <taxon>Rattus</taxon>
    </lineage>
</organism>
<keyword id="KW-1003">Cell membrane</keyword>
<keyword id="KW-1015">Disulfide bond</keyword>
<keyword id="KW-0245">EGF-like domain</keyword>
<keyword id="KW-0325">Glycoprotein</keyword>
<keyword id="KW-0339">Growth factor</keyword>
<keyword id="KW-0358">Heparin-binding</keyword>
<keyword id="KW-0472">Membrane</keyword>
<keyword id="KW-1185">Reference proteome</keyword>
<keyword id="KW-0964">Secreted</keyword>
<keyword id="KW-0732">Signal</keyword>
<keyword id="KW-0812">Transmembrane</keyword>
<keyword id="KW-1133">Transmembrane helix</keyword>
<proteinExistence type="evidence at transcript level"/>
<protein>
    <recommendedName>
        <fullName>Proheparin-binding EGF-like growth factor</fullName>
    </recommendedName>
    <component>
        <recommendedName>
            <fullName>Heparin-binding EGF-like growth factor</fullName>
            <shortName>HB-EGF</shortName>
            <shortName>HBEGF</shortName>
        </recommendedName>
    </component>
</protein>
<gene>
    <name type="primary">Hbegf</name>
    <name type="synonym">Dtr</name>
    <name type="synonym">Hegfl</name>
</gene>
<dbReference type="EMBL" id="L05489">
    <property type="protein sequence ID" value="AAA81780.1"/>
    <property type="molecule type" value="mRNA"/>
</dbReference>
<dbReference type="PIR" id="JC1409">
    <property type="entry name" value="JC1409"/>
</dbReference>
<dbReference type="RefSeq" id="NP_037077.1">
    <property type="nucleotide sequence ID" value="NM_012945.2"/>
</dbReference>
<dbReference type="SMR" id="Q06175"/>
<dbReference type="FunCoup" id="Q06175">
    <property type="interactions" value="438"/>
</dbReference>
<dbReference type="STRING" id="10116.ENSRNOP00000025157"/>
<dbReference type="GlyCosmos" id="Q06175">
    <property type="glycosylation" value="1 site, No reported glycans"/>
</dbReference>
<dbReference type="GlyGen" id="Q06175">
    <property type="glycosylation" value="1 site"/>
</dbReference>
<dbReference type="PhosphoSitePlus" id="Q06175"/>
<dbReference type="PaxDb" id="10116-ENSRNOP00000025157"/>
<dbReference type="Ensembl" id="ENSRNOT00000025157.7">
    <property type="protein sequence ID" value="ENSRNOP00000025157.5"/>
    <property type="gene ID" value="ENSRNOG00000018646.7"/>
</dbReference>
<dbReference type="GeneID" id="25433"/>
<dbReference type="KEGG" id="rno:25433"/>
<dbReference type="UCSC" id="RGD:2526">
    <property type="organism name" value="rat"/>
</dbReference>
<dbReference type="AGR" id="RGD:2526"/>
<dbReference type="CTD" id="1839"/>
<dbReference type="RGD" id="2526">
    <property type="gene designation" value="Hbegf"/>
</dbReference>
<dbReference type="eggNOG" id="ENOG502S0ZP">
    <property type="taxonomic scope" value="Eukaryota"/>
</dbReference>
<dbReference type="GeneTree" id="ENSGT00940000156901"/>
<dbReference type="HOGENOM" id="CLU_096527_2_0_1"/>
<dbReference type="InParanoid" id="Q06175"/>
<dbReference type="OMA" id="PSCICQE"/>
<dbReference type="OrthoDB" id="8780145at2759"/>
<dbReference type="PhylomeDB" id="Q06175"/>
<dbReference type="Reactome" id="R-RNO-1227986">
    <property type="pathway name" value="Signaling by ERBB2"/>
</dbReference>
<dbReference type="Reactome" id="R-RNO-1236394">
    <property type="pathway name" value="Signaling by ERBB4"/>
</dbReference>
<dbReference type="Reactome" id="R-RNO-1250196">
    <property type="pathway name" value="SHC1 events in ERBB2 signaling"/>
</dbReference>
<dbReference type="Reactome" id="R-RNO-1250342">
    <property type="pathway name" value="PI3K events in ERBB4 signaling"/>
</dbReference>
<dbReference type="Reactome" id="R-RNO-1250347">
    <property type="pathway name" value="SHC1 events in ERBB4 signaling"/>
</dbReference>
<dbReference type="Reactome" id="R-RNO-1257604">
    <property type="pathway name" value="PIP3 activates AKT signaling"/>
</dbReference>
<dbReference type="Reactome" id="R-RNO-177929">
    <property type="pathway name" value="Signaling by EGFR"/>
</dbReference>
<dbReference type="Reactome" id="R-RNO-179812">
    <property type="pathway name" value="GRB2 events in EGFR signaling"/>
</dbReference>
<dbReference type="Reactome" id="R-RNO-180292">
    <property type="pathway name" value="GAB1 signalosome"/>
</dbReference>
<dbReference type="Reactome" id="R-RNO-180336">
    <property type="pathway name" value="SHC1 events in EGFR signaling"/>
</dbReference>
<dbReference type="Reactome" id="R-RNO-182971">
    <property type="pathway name" value="EGFR downregulation"/>
</dbReference>
<dbReference type="Reactome" id="R-RNO-1963640">
    <property type="pathway name" value="GRB2 events in ERBB2 signaling"/>
</dbReference>
<dbReference type="Reactome" id="R-RNO-1963642">
    <property type="pathway name" value="PI3K events in ERBB2 signaling"/>
</dbReference>
<dbReference type="Reactome" id="R-RNO-212718">
    <property type="pathway name" value="EGFR interacts with phospholipase C-gamma"/>
</dbReference>
<dbReference type="Reactome" id="R-RNO-2179392">
    <property type="pathway name" value="EGFR Transactivation by Gastrin"/>
</dbReference>
<dbReference type="Reactome" id="R-RNO-5673001">
    <property type="pathway name" value="RAF/MAP kinase cascade"/>
</dbReference>
<dbReference type="Reactome" id="R-RNO-6785631">
    <property type="pathway name" value="ERBB2 Regulates Cell Motility"/>
</dbReference>
<dbReference type="Reactome" id="R-RNO-6811558">
    <property type="pathway name" value="PI5P, PP2A and IER3 Regulate PI3K/AKT Signaling"/>
</dbReference>
<dbReference type="Reactome" id="R-RNO-8847993">
    <property type="pathway name" value="ERBB2 Activates PTK6 Signaling"/>
</dbReference>
<dbReference type="Reactome" id="R-RNO-8856825">
    <property type="pathway name" value="Cargo recognition for clathrin-mediated endocytosis"/>
</dbReference>
<dbReference type="Reactome" id="R-RNO-8856828">
    <property type="pathway name" value="Clathrin-mediated endocytosis"/>
</dbReference>
<dbReference type="Reactome" id="R-RNO-8857538">
    <property type="pathway name" value="PTK6 promotes HIF1A stabilization"/>
</dbReference>
<dbReference type="Reactome" id="R-RNO-8863795">
    <property type="pathway name" value="Downregulation of ERBB2 signaling"/>
</dbReference>
<dbReference type="Reactome" id="R-RNO-9009391">
    <property type="pathway name" value="Extra-nuclear estrogen signaling"/>
</dbReference>
<dbReference type="PRO" id="PR:Q06175"/>
<dbReference type="Proteomes" id="UP000002494">
    <property type="component" value="Chromosome 18"/>
</dbReference>
<dbReference type="Bgee" id="ENSRNOG00000018646">
    <property type="expression patterns" value="Expressed in quadriceps femoris and 18 other cell types or tissues"/>
</dbReference>
<dbReference type="GO" id="GO:0009986">
    <property type="term" value="C:cell surface"/>
    <property type="evidence" value="ECO:0000266"/>
    <property type="project" value="RGD"/>
</dbReference>
<dbReference type="GO" id="GO:0005615">
    <property type="term" value="C:extracellular space"/>
    <property type="evidence" value="ECO:0000266"/>
    <property type="project" value="RGD"/>
</dbReference>
<dbReference type="GO" id="GO:0005886">
    <property type="term" value="C:plasma membrane"/>
    <property type="evidence" value="ECO:0000266"/>
    <property type="project" value="RGD"/>
</dbReference>
<dbReference type="GO" id="GO:0005154">
    <property type="term" value="F:epidermal growth factor receptor binding"/>
    <property type="evidence" value="ECO:0000315"/>
    <property type="project" value="RGD"/>
</dbReference>
<dbReference type="GO" id="GO:0008083">
    <property type="term" value="F:growth factor activity"/>
    <property type="evidence" value="ECO:0000315"/>
    <property type="project" value="RGD"/>
</dbReference>
<dbReference type="GO" id="GO:0008201">
    <property type="term" value="F:heparin binding"/>
    <property type="evidence" value="ECO:0000266"/>
    <property type="project" value="RGD"/>
</dbReference>
<dbReference type="GO" id="GO:0048018">
    <property type="term" value="F:receptor ligand activity"/>
    <property type="evidence" value="ECO:0000266"/>
    <property type="project" value="RGD"/>
</dbReference>
<dbReference type="GO" id="GO:0030297">
    <property type="term" value="F:transmembrane receptor protein tyrosine kinase activator activity"/>
    <property type="evidence" value="ECO:0000266"/>
    <property type="project" value="RGD"/>
</dbReference>
<dbReference type="GO" id="GO:0060326">
    <property type="term" value="P:cell chemotaxis"/>
    <property type="evidence" value="ECO:0000266"/>
    <property type="project" value="RGD"/>
</dbReference>
<dbReference type="GO" id="GO:0016477">
    <property type="term" value="P:cell migration"/>
    <property type="evidence" value="ECO:0000266"/>
    <property type="project" value="RGD"/>
</dbReference>
<dbReference type="GO" id="GO:0007173">
    <property type="term" value="P:epidermal growth factor receptor signaling pathway"/>
    <property type="evidence" value="ECO:0000315"/>
    <property type="project" value="RGD"/>
</dbReference>
<dbReference type="GO" id="GO:0038134">
    <property type="term" value="P:ERBB2-EGFR signaling pathway"/>
    <property type="evidence" value="ECO:0000266"/>
    <property type="project" value="RGD"/>
</dbReference>
<dbReference type="GO" id="GO:0038135">
    <property type="term" value="P:ERBB2-ERBB4 signaling pathway"/>
    <property type="evidence" value="ECO:0000266"/>
    <property type="project" value="RGD"/>
</dbReference>
<dbReference type="GO" id="GO:0010561">
    <property type="term" value="P:negative regulation of glycoprotein biosynthetic process"/>
    <property type="evidence" value="ECO:0000314"/>
    <property type="project" value="UniProtKB"/>
</dbReference>
<dbReference type="GO" id="GO:0007399">
    <property type="term" value="P:nervous system development"/>
    <property type="evidence" value="ECO:0000304"/>
    <property type="project" value="RGD"/>
</dbReference>
<dbReference type="GO" id="GO:0030307">
    <property type="term" value="P:positive regulation of cell growth"/>
    <property type="evidence" value="ECO:0000314"/>
    <property type="project" value="RGD"/>
</dbReference>
<dbReference type="GO" id="GO:0030335">
    <property type="term" value="P:positive regulation of cell migration"/>
    <property type="evidence" value="ECO:0000266"/>
    <property type="project" value="RGD"/>
</dbReference>
<dbReference type="GO" id="GO:0008284">
    <property type="term" value="P:positive regulation of cell population proliferation"/>
    <property type="evidence" value="ECO:0000266"/>
    <property type="project" value="RGD"/>
</dbReference>
<dbReference type="GO" id="GO:0051549">
    <property type="term" value="P:positive regulation of keratinocyte migration"/>
    <property type="evidence" value="ECO:0000266"/>
    <property type="project" value="RGD"/>
</dbReference>
<dbReference type="GO" id="GO:0051897">
    <property type="term" value="P:positive regulation of phosphatidylinositol 3-kinase/protein kinase B signal transduction"/>
    <property type="evidence" value="ECO:0000266"/>
    <property type="project" value="RGD"/>
</dbReference>
<dbReference type="GO" id="GO:0048661">
    <property type="term" value="P:positive regulation of smooth muscle cell proliferation"/>
    <property type="evidence" value="ECO:0000266"/>
    <property type="project" value="RGD"/>
</dbReference>
<dbReference type="GO" id="GO:0090303">
    <property type="term" value="P:positive regulation of wound healing"/>
    <property type="evidence" value="ECO:0000266"/>
    <property type="project" value="RGD"/>
</dbReference>
<dbReference type="GO" id="GO:0008016">
    <property type="term" value="P:regulation of heart contraction"/>
    <property type="evidence" value="ECO:0000266"/>
    <property type="project" value="RGD"/>
</dbReference>
<dbReference type="GO" id="GO:0035313">
    <property type="term" value="P:wound healing, spreading of epidermal cells"/>
    <property type="evidence" value="ECO:0000266"/>
    <property type="project" value="RGD"/>
</dbReference>
<dbReference type="FunFam" id="2.10.25.10:FF:000158">
    <property type="entry name" value="proheparin-binding EGF-like growth factor"/>
    <property type="match status" value="1"/>
</dbReference>
<dbReference type="Gene3D" id="2.10.25.10">
    <property type="entry name" value="Laminin"/>
    <property type="match status" value="1"/>
</dbReference>
<dbReference type="InterPro" id="IPR000742">
    <property type="entry name" value="EGF-like_dom"/>
</dbReference>
<dbReference type="PANTHER" id="PTHR10740:SF4">
    <property type="entry name" value="PROHEPARIN-BINDING EGF-LIKE GROWTH FACTOR"/>
    <property type="match status" value="1"/>
</dbReference>
<dbReference type="PANTHER" id="PTHR10740">
    <property type="entry name" value="TRANSFORMING GROWTH FACTOR ALPHA"/>
    <property type="match status" value="1"/>
</dbReference>
<dbReference type="SUPFAM" id="SSF57196">
    <property type="entry name" value="EGF/Laminin"/>
    <property type="match status" value="1"/>
</dbReference>
<dbReference type="PROSITE" id="PS00022">
    <property type="entry name" value="EGF_1"/>
    <property type="match status" value="1"/>
</dbReference>
<dbReference type="PROSITE" id="PS01186">
    <property type="entry name" value="EGF_2"/>
    <property type="match status" value="1"/>
</dbReference>
<dbReference type="PROSITE" id="PS50026">
    <property type="entry name" value="EGF_3"/>
    <property type="match status" value="1"/>
</dbReference>
<feature type="signal peptide" evidence="2">
    <location>
        <begin position="1"/>
        <end position="23"/>
    </location>
</feature>
<feature type="chain" id="PRO_0000302806" description="Proheparin-binding EGF-like growth factor">
    <location>
        <begin position="24"/>
        <end position="208"/>
    </location>
</feature>
<feature type="propeptide" id="PRO_0000007620" evidence="1">
    <location>
        <begin position="24"/>
        <end position="62"/>
    </location>
</feature>
<feature type="chain" id="PRO_0000007621" description="Heparin-binding EGF-like growth factor">
    <location>
        <begin position="63"/>
        <end position="148"/>
    </location>
</feature>
<feature type="propeptide" id="PRO_0000007622" description="C-terminal" evidence="2">
    <location>
        <begin position="149"/>
        <end position="208"/>
    </location>
</feature>
<feature type="topological domain" description="Extracellular" evidence="2">
    <location>
        <begin position="24"/>
        <end position="160"/>
    </location>
</feature>
<feature type="transmembrane region" description="Helical" evidence="2">
    <location>
        <begin position="161"/>
        <end position="184"/>
    </location>
</feature>
<feature type="topological domain" description="Cytoplasmic" evidence="2">
    <location>
        <begin position="185"/>
        <end position="208"/>
    </location>
</feature>
<feature type="domain" description="EGF-like" evidence="3">
    <location>
        <begin position="104"/>
        <end position="144"/>
    </location>
</feature>
<feature type="region of interest" description="Disordered" evidence="4">
    <location>
        <begin position="82"/>
        <end position="103"/>
    </location>
</feature>
<feature type="compositionally biased region" description="Basic residues" evidence="4">
    <location>
        <begin position="91"/>
        <end position="102"/>
    </location>
</feature>
<feature type="glycosylation site" description="O-linked (GalNAc...) threonine" evidence="1">
    <location>
        <position position="85"/>
    </location>
</feature>
<feature type="disulfide bond" evidence="3">
    <location>
        <begin position="108"/>
        <end position="121"/>
    </location>
</feature>
<feature type="disulfide bond" evidence="3">
    <location>
        <begin position="116"/>
        <end position="132"/>
    </location>
</feature>
<feature type="disulfide bond" evidence="3">
    <location>
        <begin position="134"/>
        <end position="143"/>
    </location>
</feature>
<sequence length="208" mass="22843">MKLLPSVVLKLFLAAVLSALVTGESLERLRRGLAAATSNPDPPTGTTNQLLPTGADRAQEVQDLEGTDLDLFKVAFSSKPQALATPGKEKNGKKKRKGKGLGKKRDPCLKKYKDYCIHGECRYLKELRIPSCHCLPGYHGQRCHGLTLPVENPLYTYDHTTVLAVVAVVLSSVCLLVIVGLLMFRYHRRGGYDLESEEKVKLGMASSH</sequence>
<evidence type="ECO:0000250" key="1"/>
<evidence type="ECO:0000255" key="2"/>
<evidence type="ECO:0000255" key="3">
    <source>
        <dbReference type="PROSITE-ProRule" id="PRU00076"/>
    </source>
</evidence>
<evidence type="ECO:0000256" key="4">
    <source>
        <dbReference type="SAM" id="MobiDB-lite"/>
    </source>
</evidence>
<evidence type="ECO:0000269" key="5">
    <source>
    </source>
</evidence>
<name>HBEGF_RAT</name>
<accession>Q06175</accession>
<reference key="1">
    <citation type="journal article" date="1993" name="Biochem. Biophys. Res. Commun.">
        <title>Heparin-binding EGF-like growth factor: characterization of rat and mouse cDNA clones, protein domain conservation across species, and transcript expression in tissues.</title>
        <authorList>
            <person name="Abraham J.A."/>
            <person name="Damm D."/>
            <person name="Bajardi A."/>
            <person name="Miller J."/>
            <person name="Klagsbrun M."/>
            <person name="Ezekowitz R.A.B."/>
        </authorList>
    </citation>
    <scope>NUCLEOTIDE SEQUENCE [MRNA]</scope>
    <scope>TISSUE SPECIFICITY</scope>
    <source>
        <strain>Sprague-Dawley</strain>
        <tissue>Macrophage</tissue>
    </source>
</reference>
<comment type="function">
    <text evidence="1">Growth factor that mediates its effects via EGFR, ERBB2 and ERBB4. Required for normal cardiac valve formation and normal heart function. Promotes smooth muscle cell proliferation. May be involved in macrophage-mediated cellular proliferation. It is mitogenic for fibroblasts, but not endothelial cells. It is able to bind EGF receptor/EGFR with higher affinity than EGF itself and is a far more potent mitogen for smooth muscle cells than EGF. Also acts as a diphtheria toxin receptor (By similarity).</text>
</comment>
<comment type="subunit">
    <text evidence="1">Interacts with FBLN1. Interacts with EGFR and ERBB4 (By similarity).</text>
</comment>
<comment type="subcellular location">
    <molecule>Heparin-binding EGF-like growth factor</molecule>
    <subcellularLocation>
        <location>Secreted</location>
        <location>Extracellular space</location>
    </subcellularLocation>
    <text>Mature HB-EGF is released into the extracellular space and probably binds to a receptor.</text>
</comment>
<comment type="subcellular location">
    <molecule>Proheparin-binding EGF-like growth factor</molecule>
    <subcellularLocation>
        <location>Cell membrane</location>
        <topology>Single-pass type I membrane protein</topology>
    </subcellularLocation>
</comment>
<comment type="tissue specificity">
    <text evidence="5">Most abundant in skeletal muscle, lung, spleen brain and heart.</text>
</comment>
<comment type="PTM">
    <text evidence="1">O-glycosylated.</text>
</comment>